<reference key="1">
    <citation type="submission" date="2007-02" db="EMBL/GenBank/DDBJ databases">
        <title>Complete sequence of chromosome 1 of Rhodobacter sphaeroides ATCC 17029.</title>
        <authorList>
            <person name="Copeland A."/>
            <person name="Lucas S."/>
            <person name="Lapidus A."/>
            <person name="Barry K."/>
            <person name="Detter J.C."/>
            <person name="Glavina del Rio T."/>
            <person name="Hammon N."/>
            <person name="Israni S."/>
            <person name="Dalin E."/>
            <person name="Tice H."/>
            <person name="Pitluck S."/>
            <person name="Kiss H."/>
            <person name="Brettin T."/>
            <person name="Bruce D."/>
            <person name="Han C."/>
            <person name="Tapia R."/>
            <person name="Gilna P."/>
            <person name="Schmutz J."/>
            <person name="Larimer F."/>
            <person name="Land M."/>
            <person name="Hauser L."/>
            <person name="Kyrpides N."/>
            <person name="Mikhailova N."/>
            <person name="Richardson P."/>
            <person name="Mackenzie C."/>
            <person name="Choudhary M."/>
            <person name="Donohue T.J."/>
            <person name="Kaplan S."/>
        </authorList>
    </citation>
    <scope>NUCLEOTIDE SEQUENCE [LARGE SCALE GENOMIC DNA]</scope>
    <source>
        <strain>ATCC 17029 / ATH 2.4.9</strain>
    </source>
</reference>
<reference key="2">
    <citation type="journal article" date="2014" name="J. Biol. Chem.">
        <title>Three different classes of aminotransferases evolved prephenate aminotransferase functionality in arogenate-competent microorganisms.</title>
        <authorList>
            <person name="Graindorge M."/>
            <person name="Giustini C."/>
            <person name="Kraut A."/>
            <person name="Moyet L."/>
            <person name="Curien G."/>
            <person name="Matringe M."/>
        </authorList>
    </citation>
    <scope>FUNCTION</scope>
    <scope>CATALYTIC ACTIVITY</scope>
    <scope>BIOPHYSICOCHEMICAL PROPERTIES</scope>
    <source>
        <strain>RCR2011</strain>
    </source>
</reference>
<protein>
    <recommendedName>
        <fullName evidence="4">Aspartate/prephenate aminotransferase</fullName>
        <shortName evidence="4">AspAT / PAT</shortName>
        <ecNumber evidence="3">2.6.1.1</ecNumber>
        <ecNumber evidence="3">2.6.1.79</ecNumber>
    </recommendedName>
</protein>
<feature type="chain" id="PRO_0000448262" description="Aspartate/prephenate aminotransferase">
    <location>
        <begin position="1"/>
        <end position="400"/>
    </location>
</feature>
<feature type="binding site" evidence="1">
    <location>
        <position position="39"/>
    </location>
    <ligand>
        <name>L-aspartate</name>
        <dbReference type="ChEBI" id="CHEBI:29991"/>
    </ligand>
</feature>
<feature type="binding site" evidence="2">
    <location>
        <position position="125"/>
    </location>
    <ligand>
        <name>L-aspartate</name>
        <dbReference type="ChEBI" id="CHEBI:29991"/>
    </ligand>
</feature>
<feature type="binding site" evidence="2">
    <location>
        <position position="175"/>
    </location>
    <ligand>
        <name>L-aspartate</name>
        <dbReference type="ChEBI" id="CHEBI:29991"/>
    </ligand>
</feature>
<feature type="binding site" evidence="2">
    <location>
        <position position="375"/>
    </location>
    <ligand>
        <name>L-aspartate</name>
        <dbReference type="ChEBI" id="CHEBI:29991"/>
    </ligand>
</feature>
<feature type="site" description="Important for prephenate aminotransferase activity" evidence="2">
    <location>
        <position position="12"/>
    </location>
</feature>
<feature type="modified residue" description="N6-(pyridoxal phosphate)lysine" evidence="2">
    <location>
        <position position="239"/>
    </location>
</feature>
<comment type="function">
    <text evidence="3">Catalyzes the reversible conversion of aspartate and 2-oxoglutarate to glutamate and oxaloacetate (PubMed:24302739). Can also transaminate prephenate in the presence of glutamate (PubMed:24302739).</text>
</comment>
<comment type="catalytic activity">
    <reaction evidence="3">
        <text>L-aspartate + 2-oxoglutarate = oxaloacetate + L-glutamate</text>
        <dbReference type="Rhea" id="RHEA:21824"/>
        <dbReference type="ChEBI" id="CHEBI:16452"/>
        <dbReference type="ChEBI" id="CHEBI:16810"/>
        <dbReference type="ChEBI" id="CHEBI:29985"/>
        <dbReference type="ChEBI" id="CHEBI:29991"/>
        <dbReference type="EC" id="2.6.1.1"/>
    </reaction>
</comment>
<comment type="catalytic activity">
    <reaction evidence="3">
        <text>L-arogenate + 2-oxoglutarate = prephenate + L-glutamate</text>
        <dbReference type="Rhea" id="RHEA:22880"/>
        <dbReference type="ChEBI" id="CHEBI:16810"/>
        <dbReference type="ChEBI" id="CHEBI:29934"/>
        <dbReference type="ChEBI" id="CHEBI:29985"/>
        <dbReference type="ChEBI" id="CHEBI:58180"/>
        <dbReference type="EC" id="2.6.1.79"/>
    </reaction>
</comment>
<comment type="cofactor">
    <cofactor evidence="2">
        <name>pyridoxal 5'-phosphate</name>
        <dbReference type="ChEBI" id="CHEBI:597326"/>
    </cofactor>
</comment>
<comment type="biophysicochemical properties">
    <kinetics>
        <KM evidence="3">27 uM for oxaloacetate</KM>
        <KM evidence="3">290 uM for prephenate</KM>
        <text evidence="3">kcat is 150 sec(-1) with oxaloacetate as substrate. kcat is 56 sec(-1) with prephenate as substrate.</text>
    </kinetics>
</comment>
<comment type="subunit">
    <text evidence="2">Homodimer.</text>
</comment>
<comment type="subcellular location">
    <subcellularLocation>
        <location evidence="4">Cytoplasm</location>
    </subcellularLocation>
</comment>
<comment type="similarity">
    <text evidence="4">Belongs to the class-I pyridoxal-phosphate-dependent aminotransferase family.</text>
</comment>
<name>AAPAT_CERS1</name>
<evidence type="ECO:0000250" key="1">
    <source>
        <dbReference type="UniProtKB" id="P00509"/>
    </source>
</evidence>
<evidence type="ECO:0000250" key="2">
    <source>
        <dbReference type="UniProtKB" id="Q56232"/>
    </source>
</evidence>
<evidence type="ECO:0000269" key="3">
    <source>
    </source>
</evidence>
<evidence type="ECO:0000305" key="4"/>
<evidence type="ECO:0000312" key="5">
    <source>
        <dbReference type="EMBL" id="ABN77524.1"/>
    </source>
</evidence>
<sequence length="400" mass="42861">MAFLSDTLARVKPSQTIAVTNKARELAAAGRDVIGLGAGEPDFDTPDNIKAAAKRAIDAGRTKYTAVDGIPELKRAICEKFERENGLKYTPAQVTVGTGGKQILYNALVATLNPGDEVIIPAPYWVSYPDMVLLAGGTPVSVAAGMETGFKLTPEQLEAAITPRTKWFIFNSPSNPTGAAYTRAELAALCEVLMRHPQVWIMSDDMYEHLVFDDFDFTTPAQIEPGLYDRTLTCNGVSKAYCMTGWRIGYAAGPVELIRAMGTIQSQSTSNPCSIAQYAALEALSGPQEFLATNREAFQRRRDLVVSMLNEAKGVTCPNPEGAFYVYPDISGCIGKTSAGGAKITDDEAFASALLEETGVAVVFGAAFGLSPNFRISYATADEVLREACARIQAFCAGLS</sequence>
<gene>
    <name evidence="5" type="ordered locus">Rsph17029_2422</name>
</gene>
<proteinExistence type="evidence at protein level"/>
<accession>A3PMF8</accession>
<dbReference type="EC" id="2.6.1.1" evidence="3"/>
<dbReference type="EC" id="2.6.1.79" evidence="3"/>
<dbReference type="EMBL" id="CP000577">
    <property type="protein sequence ID" value="ABN77524.1"/>
    <property type="molecule type" value="Genomic_DNA"/>
</dbReference>
<dbReference type="RefSeq" id="WP_002720951.1">
    <property type="nucleotide sequence ID" value="NC_009049.1"/>
</dbReference>
<dbReference type="SMR" id="A3PMF8"/>
<dbReference type="GeneID" id="3718131"/>
<dbReference type="KEGG" id="rsh:Rsph17029_2422"/>
<dbReference type="HOGENOM" id="CLU_017584_4_3_5"/>
<dbReference type="GO" id="GO:0005737">
    <property type="term" value="C:cytoplasm"/>
    <property type="evidence" value="ECO:0007669"/>
    <property type="project" value="UniProtKB-SubCell"/>
</dbReference>
<dbReference type="GO" id="GO:0033854">
    <property type="term" value="F:glutamate-prephenate aminotransferase activity"/>
    <property type="evidence" value="ECO:0007669"/>
    <property type="project" value="UniProtKB-EC"/>
</dbReference>
<dbReference type="GO" id="GO:0004069">
    <property type="term" value="F:L-aspartate:2-oxoglutarate aminotransferase activity"/>
    <property type="evidence" value="ECO:0007669"/>
    <property type="project" value="UniProtKB-EC"/>
</dbReference>
<dbReference type="GO" id="GO:0030170">
    <property type="term" value="F:pyridoxal phosphate binding"/>
    <property type="evidence" value="ECO:0007669"/>
    <property type="project" value="InterPro"/>
</dbReference>
<dbReference type="GO" id="GO:0006520">
    <property type="term" value="P:amino acid metabolic process"/>
    <property type="evidence" value="ECO:0007669"/>
    <property type="project" value="InterPro"/>
</dbReference>
<dbReference type="GO" id="GO:0009058">
    <property type="term" value="P:biosynthetic process"/>
    <property type="evidence" value="ECO:0007669"/>
    <property type="project" value="InterPro"/>
</dbReference>
<dbReference type="CDD" id="cd00609">
    <property type="entry name" value="AAT_like"/>
    <property type="match status" value="1"/>
</dbReference>
<dbReference type="FunFam" id="3.40.640.10:FF:000033">
    <property type="entry name" value="Aspartate aminotransferase"/>
    <property type="match status" value="1"/>
</dbReference>
<dbReference type="Gene3D" id="3.90.1150.10">
    <property type="entry name" value="Aspartate Aminotransferase, domain 1"/>
    <property type="match status" value="1"/>
</dbReference>
<dbReference type="Gene3D" id="3.40.640.10">
    <property type="entry name" value="Type I PLP-dependent aspartate aminotransferase-like (Major domain)"/>
    <property type="match status" value="1"/>
</dbReference>
<dbReference type="InterPro" id="IPR004839">
    <property type="entry name" value="Aminotransferase_I/II_large"/>
</dbReference>
<dbReference type="InterPro" id="IPR050596">
    <property type="entry name" value="AspAT/PAT-like"/>
</dbReference>
<dbReference type="InterPro" id="IPR015424">
    <property type="entry name" value="PyrdxlP-dep_Trfase"/>
</dbReference>
<dbReference type="InterPro" id="IPR015421">
    <property type="entry name" value="PyrdxlP-dep_Trfase_major"/>
</dbReference>
<dbReference type="InterPro" id="IPR015422">
    <property type="entry name" value="PyrdxlP-dep_Trfase_small"/>
</dbReference>
<dbReference type="PANTHER" id="PTHR46383">
    <property type="entry name" value="ASPARTATE AMINOTRANSFERASE"/>
    <property type="match status" value="1"/>
</dbReference>
<dbReference type="PANTHER" id="PTHR46383:SF1">
    <property type="entry name" value="ASPARTATE AMINOTRANSFERASE"/>
    <property type="match status" value="1"/>
</dbReference>
<dbReference type="Pfam" id="PF00155">
    <property type="entry name" value="Aminotran_1_2"/>
    <property type="match status" value="1"/>
</dbReference>
<dbReference type="SUPFAM" id="SSF53383">
    <property type="entry name" value="PLP-dependent transferases"/>
    <property type="match status" value="1"/>
</dbReference>
<organism>
    <name type="scientific">Cereibacter sphaeroides (strain ATCC 17029 / ATH 2.4.9)</name>
    <name type="common">Rhodobacter sphaeroides</name>
    <dbReference type="NCBI Taxonomy" id="349101"/>
    <lineage>
        <taxon>Bacteria</taxon>
        <taxon>Pseudomonadati</taxon>
        <taxon>Pseudomonadota</taxon>
        <taxon>Alphaproteobacteria</taxon>
        <taxon>Rhodobacterales</taxon>
        <taxon>Paracoccaceae</taxon>
        <taxon>Cereibacter</taxon>
    </lineage>
</organism>
<keyword id="KW-0032">Aminotransferase</keyword>
<keyword id="KW-0963">Cytoplasm</keyword>
<keyword id="KW-0663">Pyridoxal phosphate</keyword>
<keyword id="KW-0808">Transferase</keyword>